<keyword id="KW-0547">Nucleotide-binding</keyword>
<keyword id="KW-0597">Phosphoprotein</keyword>
<keyword id="KW-1185">Reference proteome</keyword>
<keyword id="KW-0804">Transcription</keyword>
<keyword id="KW-0805">Transcription regulation</keyword>
<reference key="1">
    <citation type="journal article" date="2002" name="J. Bacteriol.">
        <title>Whole-genome comparison of Mycobacterium tuberculosis clinical and laboratory strains.</title>
        <authorList>
            <person name="Fleischmann R.D."/>
            <person name="Alland D."/>
            <person name="Eisen J.A."/>
            <person name="Carpenter L."/>
            <person name="White O."/>
            <person name="Peterson J.D."/>
            <person name="DeBoy R.T."/>
            <person name="Dodson R.J."/>
            <person name="Gwinn M.L."/>
            <person name="Haft D.H."/>
            <person name="Hickey E.K."/>
            <person name="Kolonay J.F."/>
            <person name="Nelson W.C."/>
            <person name="Umayam L.A."/>
            <person name="Ermolaeva M.D."/>
            <person name="Salzberg S.L."/>
            <person name="Delcher A."/>
            <person name="Utterback T.R."/>
            <person name="Weidman J.F."/>
            <person name="Khouri H.M."/>
            <person name="Gill J."/>
            <person name="Mikula A."/>
            <person name="Bishai W."/>
            <person name="Jacobs W.R. Jr."/>
            <person name="Venter J.C."/>
            <person name="Fraser C.M."/>
        </authorList>
    </citation>
    <scope>NUCLEOTIDE SEQUENCE [LARGE SCALE GENOMIC DNA]</scope>
    <source>
        <strain>CDC 1551 / Oshkosh</strain>
    </source>
</reference>
<gene>
    <name type="primary">glnB</name>
    <name type="ordered locus">MT2987</name>
</gene>
<dbReference type="EMBL" id="AE000516">
    <property type="protein sequence ID" value="AAK47313.1"/>
    <property type="molecule type" value="Genomic_DNA"/>
</dbReference>
<dbReference type="PIR" id="G70747">
    <property type="entry name" value="G70747"/>
</dbReference>
<dbReference type="RefSeq" id="WP_003414756.1">
    <property type="nucleotide sequence ID" value="NZ_KK341227.1"/>
</dbReference>
<dbReference type="SMR" id="P9WN30"/>
<dbReference type="GeneID" id="45426906"/>
<dbReference type="KEGG" id="mtc:MT2987"/>
<dbReference type="PATRIC" id="fig|83331.31.peg.3227"/>
<dbReference type="HOGENOM" id="CLU_082268_0_0_11"/>
<dbReference type="Proteomes" id="UP000001020">
    <property type="component" value="Chromosome"/>
</dbReference>
<dbReference type="GO" id="GO:0005829">
    <property type="term" value="C:cytosol"/>
    <property type="evidence" value="ECO:0007669"/>
    <property type="project" value="TreeGrafter"/>
</dbReference>
<dbReference type="GO" id="GO:0005524">
    <property type="term" value="F:ATP binding"/>
    <property type="evidence" value="ECO:0007669"/>
    <property type="project" value="TreeGrafter"/>
</dbReference>
<dbReference type="GO" id="GO:0030234">
    <property type="term" value="F:enzyme regulator activity"/>
    <property type="evidence" value="ECO:0007669"/>
    <property type="project" value="InterPro"/>
</dbReference>
<dbReference type="GO" id="GO:0006808">
    <property type="term" value="P:regulation of nitrogen utilization"/>
    <property type="evidence" value="ECO:0007669"/>
    <property type="project" value="InterPro"/>
</dbReference>
<dbReference type="FunFam" id="3.30.70.120:FF:000001">
    <property type="entry name" value="Nitrogen regulatory protein P-II"/>
    <property type="match status" value="1"/>
</dbReference>
<dbReference type="Gene3D" id="3.30.70.120">
    <property type="match status" value="1"/>
</dbReference>
<dbReference type="InterPro" id="IPR002187">
    <property type="entry name" value="N-reg_PII"/>
</dbReference>
<dbReference type="InterPro" id="IPR011322">
    <property type="entry name" value="N-reg_PII-like_a/b"/>
</dbReference>
<dbReference type="InterPro" id="IPR015867">
    <property type="entry name" value="N-reg_PII/ATP_PRibTrfase_C"/>
</dbReference>
<dbReference type="InterPro" id="IPR017918">
    <property type="entry name" value="N-reg_PII_CS"/>
</dbReference>
<dbReference type="InterPro" id="IPR002332">
    <property type="entry name" value="N-reg_PII_urydylation_site"/>
</dbReference>
<dbReference type="PANTHER" id="PTHR30115">
    <property type="entry name" value="NITROGEN REGULATORY PROTEIN P-II"/>
    <property type="match status" value="1"/>
</dbReference>
<dbReference type="PANTHER" id="PTHR30115:SF11">
    <property type="entry name" value="NITROGEN REGULATORY PROTEIN P-II HOMOLOG"/>
    <property type="match status" value="1"/>
</dbReference>
<dbReference type="Pfam" id="PF00543">
    <property type="entry name" value="P-II"/>
    <property type="match status" value="1"/>
</dbReference>
<dbReference type="PIRSF" id="PIRSF039144">
    <property type="entry name" value="GlnB"/>
    <property type="match status" value="1"/>
</dbReference>
<dbReference type="PRINTS" id="PR00340">
    <property type="entry name" value="PIIGLNB"/>
</dbReference>
<dbReference type="SMART" id="SM00938">
    <property type="entry name" value="P-II"/>
    <property type="match status" value="1"/>
</dbReference>
<dbReference type="SUPFAM" id="SSF54913">
    <property type="entry name" value="GlnB-like"/>
    <property type="match status" value="1"/>
</dbReference>
<dbReference type="PROSITE" id="PS00638">
    <property type="entry name" value="PII_GLNB_CTER"/>
    <property type="match status" value="1"/>
</dbReference>
<dbReference type="PROSITE" id="PS51343">
    <property type="entry name" value="PII_GLNB_DOM"/>
    <property type="match status" value="1"/>
</dbReference>
<dbReference type="PROSITE" id="PS00496">
    <property type="entry name" value="PII_GLNB_UMP"/>
    <property type="match status" value="1"/>
</dbReference>
<accession>P9WN30</accession>
<accession>L0TB95</accession>
<accession>P64249</accession>
<accession>Q10960</accession>
<proteinExistence type="inferred from homology"/>
<evidence type="ECO:0000250" key="1"/>
<evidence type="ECO:0000255" key="2">
    <source>
        <dbReference type="PROSITE-ProRule" id="PRU00675"/>
    </source>
</evidence>
<feature type="chain" id="PRO_0000427198" description="Nitrogen regulatory protein P-II">
    <location>
        <begin position="1"/>
        <end position="112"/>
    </location>
</feature>
<feature type="modified residue" description="O-UMP-tyrosine" evidence="2">
    <location>
        <position position="51"/>
    </location>
</feature>
<organism>
    <name type="scientific">Mycobacterium tuberculosis (strain CDC 1551 / Oshkosh)</name>
    <dbReference type="NCBI Taxonomy" id="83331"/>
    <lineage>
        <taxon>Bacteria</taxon>
        <taxon>Bacillati</taxon>
        <taxon>Actinomycetota</taxon>
        <taxon>Actinomycetes</taxon>
        <taxon>Mycobacteriales</taxon>
        <taxon>Mycobacteriaceae</taxon>
        <taxon>Mycobacterium</taxon>
        <taxon>Mycobacterium tuberculosis complex</taxon>
    </lineage>
</organism>
<protein>
    <recommendedName>
        <fullName>Nitrogen regulatory protein P-II</fullName>
    </recommendedName>
</protein>
<comment type="function">
    <text evidence="1">In nitrogen-limiting conditions, when the ratio of Gln to 2-ketoglutarate decreases, P-II is uridylylated to P-II-UMP. P-II-UMP allows the deadenylation of glutamine synthetase (GS), thus activating the enzyme. Conversely, in nitrogen excess P-II is deuridylated and promotes the adenylation of GS. P-II indirectly controls the transcription of the GS gene (glnA). P-II prevents NR-II-catalyzed conversion of NR-I to NR-I-phosphate, the transcriptional activator of glnA. When P-II is uridylylated to P-II-UMP, these events are reversed (By similarity).</text>
</comment>
<comment type="subunit">
    <text evidence="1">Homotrimer.</text>
</comment>
<comment type="similarity">
    <text evidence="2">Belongs to the P(II) protein family.</text>
</comment>
<sequence length="112" mass="12227">MKLITAIVKPFTLDDVKTSLEDAGVLGMTVSEIQGYGRQKGHTEVYRGAEYSVDFVPKVRIEVVVDDSIVDKVVDSIVRAARTGKIGDGKVWVSPVDTIVRVRTGERGHDAL</sequence>
<name>GLNB_MYCTO</name>